<proteinExistence type="evidence at protein level"/>
<feature type="signal peptide" evidence="1">
    <location>
        <begin position="1"/>
        <end position="30"/>
    </location>
</feature>
<feature type="chain" id="PRO_0000314592" description="Pilin">
    <location>
        <begin position="31"/>
        <end position="103"/>
    </location>
</feature>
<feature type="region of interest" description="Disordered" evidence="2">
    <location>
        <begin position="61"/>
        <end position="103"/>
    </location>
</feature>
<feature type="compositionally biased region" description="Basic and acidic residues" evidence="2">
    <location>
        <begin position="61"/>
        <end position="76"/>
    </location>
</feature>
<feature type="compositionally biased region" description="Pro residues" evidence="2">
    <location>
        <begin position="92"/>
        <end position="103"/>
    </location>
</feature>
<sequence>MYRFACRTLMLAACILATGVAGLGVGAQSAAQTAPVPDYYWCPGQPFDPAWGPNWDPYTCHDDFHRDSDGPDHSRDYPGPILEGPVLDDPGAAPPPPAAGGGA</sequence>
<comment type="function">
    <text evidence="5">Structural subunit of M.tuberculosis pili (MTP), which are thin, flexible, coiled-coil, aggregative fibers. Mediates adhesion to the extracellular matrix (Probable).</text>
</comment>
<comment type="subunit">
    <text evidence="3">Forms a homomer composed of subunits assembled in a large structure.</text>
</comment>
<comment type="subcellular location">
    <subcellularLocation>
        <location evidence="3">Fimbrium</location>
    </subcellularLocation>
    <text>Part of the pili surface structure.</text>
</comment>
<comment type="similarity">
    <text evidence="4">Belongs to the mycobacterial pilin family.</text>
</comment>
<accession>A5U7Y7</accession>
<gene>
    <name type="primary">mtp</name>
    <name type="ordered locus">MRA_3354</name>
</gene>
<keyword id="KW-0130">Cell adhesion</keyword>
<keyword id="KW-0281">Fimbrium</keyword>
<keyword id="KW-1185">Reference proteome</keyword>
<keyword id="KW-0732">Signal</keyword>
<name>PILIN_MYCTA</name>
<dbReference type="EMBL" id="CP000611">
    <property type="protein sequence ID" value="ABQ75137.1"/>
    <property type="molecule type" value="Genomic_DNA"/>
</dbReference>
<dbReference type="RefSeq" id="WP_003417257.1">
    <property type="nucleotide sequence ID" value="NZ_CP016972.1"/>
</dbReference>
<dbReference type="GeneID" id="45427312"/>
<dbReference type="KEGG" id="mra:MRA_3354"/>
<dbReference type="eggNOG" id="ENOG5031U6Y">
    <property type="taxonomic scope" value="Bacteria"/>
</dbReference>
<dbReference type="HOGENOM" id="CLU_2260590_0_0_11"/>
<dbReference type="Proteomes" id="UP000001988">
    <property type="component" value="Chromosome"/>
</dbReference>
<dbReference type="GO" id="GO:0009289">
    <property type="term" value="C:pilus"/>
    <property type="evidence" value="ECO:0007669"/>
    <property type="project" value="UniProtKB-SubCell"/>
</dbReference>
<dbReference type="GO" id="GO:0007155">
    <property type="term" value="P:cell adhesion"/>
    <property type="evidence" value="ECO:0007669"/>
    <property type="project" value="UniProtKB-KW"/>
</dbReference>
<reference key="1">
    <citation type="journal article" date="2008" name="PLoS ONE">
        <title>Genetic basis of virulence attenuation revealed by comparative genomic analysis of Mycobacterium tuberculosis strain H37Ra versus H37Rv.</title>
        <authorList>
            <person name="Zheng H."/>
            <person name="Lu L."/>
            <person name="Wang B."/>
            <person name="Pu S."/>
            <person name="Zhang X."/>
            <person name="Zhu G."/>
            <person name="Shi W."/>
            <person name="Zhang L."/>
            <person name="Wang H."/>
            <person name="Wang S."/>
            <person name="Zhao G."/>
            <person name="Zhang Y."/>
        </authorList>
    </citation>
    <scope>NUCLEOTIDE SEQUENCE [LARGE SCALE GENOMIC DNA]</scope>
    <source>
        <strain>ATCC 25177 / H37Ra</strain>
    </source>
</reference>
<reference key="2">
    <citation type="journal article" date="2007" name="Proc. Natl. Acad. Sci. U.S.A.">
        <title>Mycobacterium tuberculosis produces pili during human infection.</title>
        <authorList>
            <person name="Alteri C.J."/>
            <person name="Xicohtencatl-Cortes J."/>
            <person name="Hess S."/>
            <person name="Caballero-Olin G."/>
            <person name="Giron J.A."/>
            <person name="Friedman R.L."/>
        </authorList>
    </citation>
    <scope>FUNCTION IN PILI FORMATION</scope>
    <scope>SUBCELLULAR LOCATION</scope>
    <scope>SUBUNIT</scope>
</reference>
<organism>
    <name type="scientific">Mycobacterium tuberculosis (strain ATCC 25177 / H37Ra)</name>
    <dbReference type="NCBI Taxonomy" id="419947"/>
    <lineage>
        <taxon>Bacteria</taxon>
        <taxon>Bacillati</taxon>
        <taxon>Actinomycetota</taxon>
        <taxon>Actinomycetes</taxon>
        <taxon>Mycobacteriales</taxon>
        <taxon>Mycobacteriaceae</taxon>
        <taxon>Mycobacterium</taxon>
        <taxon>Mycobacterium tuberculosis complex</taxon>
    </lineage>
</organism>
<evidence type="ECO:0000255" key="1"/>
<evidence type="ECO:0000256" key="2">
    <source>
        <dbReference type="SAM" id="MobiDB-lite"/>
    </source>
</evidence>
<evidence type="ECO:0000269" key="3">
    <source>
    </source>
</evidence>
<evidence type="ECO:0000305" key="4"/>
<evidence type="ECO:0000305" key="5">
    <source>
    </source>
</evidence>
<protein>
    <recommendedName>
        <fullName>Pilin</fullName>
    </recommendedName>
    <alternativeName>
        <fullName>Pili structural subunit</fullName>
    </alternativeName>
</protein>